<organism>
    <name type="scientific">Polynucleobacter necessarius subsp. necessarius (strain STIR1)</name>
    <dbReference type="NCBI Taxonomy" id="452638"/>
    <lineage>
        <taxon>Bacteria</taxon>
        <taxon>Pseudomonadati</taxon>
        <taxon>Pseudomonadota</taxon>
        <taxon>Betaproteobacteria</taxon>
        <taxon>Burkholderiales</taxon>
        <taxon>Burkholderiaceae</taxon>
        <taxon>Polynucleobacter</taxon>
    </lineage>
</organism>
<gene>
    <name evidence="1" type="primary">hemL</name>
    <name type="ordered locus">Pnec_0261</name>
</gene>
<protein>
    <recommendedName>
        <fullName evidence="1">Glutamate-1-semialdehyde 2,1-aminomutase</fullName>
        <shortName evidence="1">GSA</shortName>
        <ecNumber evidence="1">5.4.3.8</ecNumber>
    </recommendedName>
    <alternativeName>
        <fullName evidence="1">Glutamate-1-semialdehyde aminotransferase</fullName>
        <shortName evidence="1">GSA-AT</shortName>
    </alternativeName>
</protein>
<reference key="1">
    <citation type="journal article" date="2013" name="Proc. Natl. Acad. Sci. U.S.A.">
        <title>Polynucleobacter necessarius, a model for genome reduction in both free-living and symbiotic bacteria.</title>
        <authorList>
            <person name="Boscaro V."/>
            <person name="Felletti M."/>
            <person name="Vannini C."/>
            <person name="Ackerman M.S."/>
            <person name="Chain P.S."/>
            <person name="Malfatti S."/>
            <person name="Vergez L.M."/>
            <person name="Shin M."/>
            <person name="Doak T.G."/>
            <person name="Lynch M."/>
            <person name="Petroni G."/>
        </authorList>
    </citation>
    <scope>NUCLEOTIDE SEQUENCE [LARGE SCALE GENOMIC DNA]</scope>
    <source>
        <strain>STIR1</strain>
    </source>
</reference>
<proteinExistence type="inferred from homology"/>
<name>GSA_POLNS</name>
<comment type="catalytic activity">
    <reaction evidence="1">
        <text>(S)-4-amino-5-oxopentanoate = 5-aminolevulinate</text>
        <dbReference type="Rhea" id="RHEA:14265"/>
        <dbReference type="ChEBI" id="CHEBI:57501"/>
        <dbReference type="ChEBI" id="CHEBI:356416"/>
        <dbReference type="EC" id="5.4.3.8"/>
    </reaction>
</comment>
<comment type="cofactor">
    <cofactor evidence="1">
        <name>pyridoxal 5'-phosphate</name>
        <dbReference type="ChEBI" id="CHEBI:597326"/>
    </cofactor>
</comment>
<comment type="pathway">
    <text evidence="1">Porphyrin-containing compound metabolism; protoporphyrin-IX biosynthesis; 5-aminolevulinate from L-glutamyl-tRNA(Glu): step 2/2.</text>
</comment>
<comment type="subunit">
    <text evidence="1">Homodimer.</text>
</comment>
<comment type="subcellular location">
    <subcellularLocation>
        <location evidence="1">Cytoplasm</location>
    </subcellularLocation>
</comment>
<comment type="similarity">
    <text evidence="1">Belongs to the class-III pyridoxal-phosphate-dependent aminotransferase family. HemL subfamily.</text>
</comment>
<feature type="chain" id="PRO_0000382357" description="Glutamate-1-semialdehyde 2,1-aminomutase">
    <location>
        <begin position="1"/>
        <end position="433"/>
    </location>
</feature>
<feature type="modified residue" description="N6-(pyridoxal phosphate)lysine" evidence="1">
    <location>
        <position position="273"/>
    </location>
</feature>
<evidence type="ECO:0000255" key="1">
    <source>
        <dbReference type="HAMAP-Rule" id="MF_00375"/>
    </source>
</evidence>
<accession>B1XT79</accession>
<sequence length="433" mass="46122">MAKVDQNEALFERAQKTIPGGVNSPVRAFRQVGGIPRFVAKAKGSYFWDANDQRYIDLIMSWGPMIVGHANPEVVAAVQKAAETSFSYGAPTEGEIELAERICALMPSVEQVRMVSSGTEATMSALRLARGYTGRDLIIKFEGCYHGHADSLLVKVGSGLLTFADSTQNAPSSGGVPQDLVKHTLVLPYNDVAAIEEVFQKQGDQIAAVIIEPIAGNMNLIQPSKAFLAAIRTLTAKHGAVLIYDEVMTGFRVALGGAQSLQGITPDLTCLGKVMGGGMPMAAFGGKKEIMSKLAPLGNVYQAGTLSGNPVAVAAGLKTLEIVSREGFYECLTGQTQKLMAGLKAAADNNTVPFTVDSVGGMFGFYFVDQVPTSYEAVTKTNIDAFKKFFHLMLDEGVYLAPSAYEAGFISIAHDNAVLEEIIAAAESSFKKL</sequence>
<dbReference type="EC" id="5.4.3.8" evidence="1"/>
<dbReference type="EMBL" id="CP001010">
    <property type="protein sequence ID" value="ACB43556.1"/>
    <property type="molecule type" value="Genomic_DNA"/>
</dbReference>
<dbReference type="SMR" id="B1XT79"/>
<dbReference type="STRING" id="452638.Pnec_0261"/>
<dbReference type="KEGG" id="pne:Pnec_0261"/>
<dbReference type="eggNOG" id="COG0001">
    <property type="taxonomic scope" value="Bacteria"/>
</dbReference>
<dbReference type="HOGENOM" id="CLU_016922_1_5_4"/>
<dbReference type="OrthoDB" id="3398487at2"/>
<dbReference type="UniPathway" id="UPA00251">
    <property type="reaction ID" value="UER00317"/>
</dbReference>
<dbReference type="GO" id="GO:0005737">
    <property type="term" value="C:cytoplasm"/>
    <property type="evidence" value="ECO:0007669"/>
    <property type="project" value="UniProtKB-SubCell"/>
</dbReference>
<dbReference type="GO" id="GO:0042286">
    <property type="term" value="F:glutamate-1-semialdehyde 2,1-aminomutase activity"/>
    <property type="evidence" value="ECO:0007669"/>
    <property type="project" value="UniProtKB-UniRule"/>
</dbReference>
<dbReference type="GO" id="GO:0030170">
    <property type="term" value="F:pyridoxal phosphate binding"/>
    <property type="evidence" value="ECO:0007669"/>
    <property type="project" value="InterPro"/>
</dbReference>
<dbReference type="GO" id="GO:0008483">
    <property type="term" value="F:transaminase activity"/>
    <property type="evidence" value="ECO:0007669"/>
    <property type="project" value="InterPro"/>
</dbReference>
<dbReference type="GO" id="GO:0006782">
    <property type="term" value="P:protoporphyrinogen IX biosynthetic process"/>
    <property type="evidence" value="ECO:0007669"/>
    <property type="project" value="UniProtKB-UniRule"/>
</dbReference>
<dbReference type="CDD" id="cd00610">
    <property type="entry name" value="OAT_like"/>
    <property type="match status" value="1"/>
</dbReference>
<dbReference type="FunFam" id="3.40.640.10:FF:000021">
    <property type="entry name" value="Glutamate-1-semialdehyde 2,1-aminomutase"/>
    <property type="match status" value="1"/>
</dbReference>
<dbReference type="Gene3D" id="3.90.1150.10">
    <property type="entry name" value="Aspartate Aminotransferase, domain 1"/>
    <property type="match status" value="1"/>
</dbReference>
<dbReference type="Gene3D" id="3.40.640.10">
    <property type="entry name" value="Type I PLP-dependent aspartate aminotransferase-like (Major domain)"/>
    <property type="match status" value="1"/>
</dbReference>
<dbReference type="HAMAP" id="MF_00375">
    <property type="entry name" value="HemL_aminotrans_3"/>
    <property type="match status" value="1"/>
</dbReference>
<dbReference type="InterPro" id="IPR004639">
    <property type="entry name" value="4pyrrol_synth_GluAld_NH2Trfase"/>
</dbReference>
<dbReference type="InterPro" id="IPR005814">
    <property type="entry name" value="Aminotrans_3"/>
</dbReference>
<dbReference type="InterPro" id="IPR049704">
    <property type="entry name" value="Aminotrans_3_PPA_site"/>
</dbReference>
<dbReference type="InterPro" id="IPR015424">
    <property type="entry name" value="PyrdxlP-dep_Trfase"/>
</dbReference>
<dbReference type="InterPro" id="IPR015421">
    <property type="entry name" value="PyrdxlP-dep_Trfase_major"/>
</dbReference>
<dbReference type="InterPro" id="IPR015422">
    <property type="entry name" value="PyrdxlP-dep_Trfase_small"/>
</dbReference>
<dbReference type="NCBIfam" id="TIGR00713">
    <property type="entry name" value="hemL"/>
    <property type="match status" value="1"/>
</dbReference>
<dbReference type="NCBIfam" id="NF000818">
    <property type="entry name" value="PRK00062.1"/>
    <property type="match status" value="1"/>
</dbReference>
<dbReference type="PANTHER" id="PTHR43713">
    <property type="entry name" value="GLUTAMATE-1-SEMIALDEHYDE 2,1-AMINOMUTASE"/>
    <property type="match status" value="1"/>
</dbReference>
<dbReference type="PANTHER" id="PTHR43713:SF3">
    <property type="entry name" value="GLUTAMATE-1-SEMIALDEHYDE 2,1-AMINOMUTASE 1, CHLOROPLASTIC-RELATED"/>
    <property type="match status" value="1"/>
</dbReference>
<dbReference type="Pfam" id="PF00202">
    <property type="entry name" value="Aminotran_3"/>
    <property type="match status" value="1"/>
</dbReference>
<dbReference type="SUPFAM" id="SSF53383">
    <property type="entry name" value="PLP-dependent transferases"/>
    <property type="match status" value="1"/>
</dbReference>
<dbReference type="PROSITE" id="PS00600">
    <property type="entry name" value="AA_TRANSFER_CLASS_3"/>
    <property type="match status" value="1"/>
</dbReference>
<keyword id="KW-0963">Cytoplasm</keyword>
<keyword id="KW-0413">Isomerase</keyword>
<keyword id="KW-0627">Porphyrin biosynthesis</keyword>
<keyword id="KW-0663">Pyridoxal phosphate</keyword>